<name>YOHO_SALPK</name>
<sequence>MRVAKIGVIALFLLMAIGGIGGVMLAGYSFILRAG</sequence>
<gene>
    <name evidence="1" type="primary">yohO</name>
    <name type="ordered locus">SSPA0649</name>
</gene>
<reference key="1">
    <citation type="journal article" date="2009" name="BMC Genomics">
        <title>Pseudogene accumulation in the evolutionary histories of Salmonella enterica serovars Paratyphi A and Typhi.</title>
        <authorList>
            <person name="Holt K.E."/>
            <person name="Thomson N.R."/>
            <person name="Wain J."/>
            <person name="Langridge G.C."/>
            <person name="Hasan R."/>
            <person name="Bhutta Z.A."/>
            <person name="Quail M.A."/>
            <person name="Norbertczak H."/>
            <person name="Walker D."/>
            <person name="Simmonds M."/>
            <person name="White B."/>
            <person name="Bason N."/>
            <person name="Mungall K."/>
            <person name="Dougan G."/>
            <person name="Parkhill J."/>
        </authorList>
    </citation>
    <scope>NUCLEOTIDE SEQUENCE [LARGE SCALE GENOMIC DNA]</scope>
    <source>
        <strain>AKU_12601</strain>
    </source>
</reference>
<accession>B5BE74</accession>
<comment type="subcellular location">
    <subcellularLocation>
        <location evidence="1">Cell inner membrane</location>
        <topology evidence="1">Single-pass membrane protein</topology>
    </subcellularLocation>
</comment>
<comment type="similarity">
    <text evidence="1">Belongs to the UPF0387 family.</text>
</comment>
<proteinExistence type="inferred from homology"/>
<keyword id="KW-0997">Cell inner membrane</keyword>
<keyword id="KW-1003">Cell membrane</keyword>
<keyword id="KW-0472">Membrane</keyword>
<keyword id="KW-0812">Transmembrane</keyword>
<keyword id="KW-1133">Transmembrane helix</keyword>
<feature type="chain" id="PRO_1000143738" description="UPF0387 membrane protein YohO">
    <location>
        <begin position="1"/>
        <end position="35"/>
    </location>
</feature>
<feature type="transmembrane region" description="Helical" evidence="1">
    <location>
        <begin position="6"/>
        <end position="26"/>
    </location>
</feature>
<dbReference type="EMBL" id="FM200053">
    <property type="protein sequence ID" value="CAR58780.1"/>
    <property type="molecule type" value="Genomic_DNA"/>
</dbReference>
<dbReference type="RefSeq" id="WP_001261696.1">
    <property type="nucleotide sequence ID" value="NC_011147.1"/>
</dbReference>
<dbReference type="KEGG" id="sek:SSPA0649"/>
<dbReference type="HOGENOM" id="CLU_220259_0_0_6"/>
<dbReference type="Proteomes" id="UP000001869">
    <property type="component" value="Chromosome"/>
</dbReference>
<dbReference type="GO" id="GO:0005886">
    <property type="term" value="C:plasma membrane"/>
    <property type="evidence" value="ECO:0007669"/>
    <property type="project" value="UniProtKB-SubCell"/>
</dbReference>
<dbReference type="HAMAP" id="MF_01362">
    <property type="entry name" value="UPF0387"/>
    <property type="match status" value="1"/>
</dbReference>
<dbReference type="InterPro" id="IPR020870">
    <property type="entry name" value="UPF0387_membrane"/>
</dbReference>
<dbReference type="NCBIfam" id="NF010225">
    <property type="entry name" value="PRK13681.1"/>
    <property type="match status" value="1"/>
</dbReference>
<protein>
    <recommendedName>
        <fullName evidence="1">UPF0387 membrane protein YohO</fullName>
    </recommendedName>
</protein>
<organism>
    <name type="scientific">Salmonella paratyphi A (strain AKU_12601)</name>
    <dbReference type="NCBI Taxonomy" id="554290"/>
    <lineage>
        <taxon>Bacteria</taxon>
        <taxon>Pseudomonadati</taxon>
        <taxon>Pseudomonadota</taxon>
        <taxon>Gammaproteobacteria</taxon>
        <taxon>Enterobacterales</taxon>
        <taxon>Enterobacteriaceae</taxon>
        <taxon>Salmonella</taxon>
    </lineage>
</organism>
<evidence type="ECO:0000255" key="1">
    <source>
        <dbReference type="HAMAP-Rule" id="MF_01362"/>
    </source>
</evidence>